<sequence>MKCPFCSHQETQVVETRVSEDGDFIRRRRQCGACDKRFTTYERPEVNFPTVVKKDGRRVEYDREKLLGSFKLALRKRPVSTVQIDSAIERIEEKLLNLGQREILSSRIGELVMRELKKLDKVAYVRYASVYRSFEDIDEFRALVDEVRK</sequence>
<comment type="function">
    <text evidence="1">Negatively regulates transcription of bacterial ribonucleotide reductase nrd genes and operons by binding to NrdR-boxes.</text>
</comment>
<comment type="cofactor">
    <cofactor evidence="1">
        <name>Zn(2+)</name>
        <dbReference type="ChEBI" id="CHEBI:29105"/>
    </cofactor>
    <text evidence="1">Binds 1 zinc ion.</text>
</comment>
<comment type="similarity">
    <text evidence="1">Belongs to the NrdR family.</text>
</comment>
<reference key="1">
    <citation type="submission" date="2006-12" db="EMBL/GenBank/DDBJ databases">
        <title>Complete sequence of chromosome 1 of Acidovorax sp. JS42.</title>
        <authorList>
            <person name="Copeland A."/>
            <person name="Lucas S."/>
            <person name="Lapidus A."/>
            <person name="Barry K."/>
            <person name="Detter J.C."/>
            <person name="Glavina del Rio T."/>
            <person name="Dalin E."/>
            <person name="Tice H."/>
            <person name="Pitluck S."/>
            <person name="Chertkov O."/>
            <person name="Brettin T."/>
            <person name="Bruce D."/>
            <person name="Han C."/>
            <person name="Tapia R."/>
            <person name="Gilna P."/>
            <person name="Schmutz J."/>
            <person name="Larimer F."/>
            <person name="Land M."/>
            <person name="Hauser L."/>
            <person name="Kyrpides N."/>
            <person name="Kim E."/>
            <person name="Stahl D."/>
            <person name="Richardson P."/>
        </authorList>
    </citation>
    <scope>NUCLEOTIDE SEQUENCE [LARGE SCALE GENOMIC DNA]</scope>
    <source>
        <strain>JS42</strain>
    </source>
</reference>
<evidence type="ECO:0000255" key="1">
    <source>
        <dbReference type="HAMAP-Rule" id="MF_00440"/>
    </source>
</evidence>
<proteinExistence type="inferred from homology"/>
<dbReference type="EMBL" id="CP000539">
    <property type="protein sequence ID" value="ABM41850.1"/>
    <property type="molecule type" value="Genomic_DNA"/>
</dbReference>
<dbReference type="SMR" id="A1W6H5"/>
<dbReference type="STRING" id="232721.Ajs_1659"/>
<dbReference type="KEGG" id="ajs:Ajs_1659"/>
<dbReference type="eggNOG" id="COG1327">
    <property type="taxonomic scope" value="Bacteria"/>
</dbReference>
<dbReference type="HOGENOM" id="CLU_108412_0_1_4"/>
<dbReference type="Proteomes" id="UP000000645">
    <property type="component" value="Chromosome"/>
</dbReference>
<dbReference type="GO" id="GO:0005524">
    <property type="term" value="F:ATP binding"/>
    <property type="evidence" value="ECO:0007669"/>
    <property type="project" value="UniProtKB-KW"/>
</dbReference>
<dbReference type="GO" id="GO:0003677">
    <property type="term" value="F:DNA binding"/>
    <property type="evidence" value="ECO:0007669"/>
    <property type="project" value="UniProtKB-KW"/>
</dbReference>
<dbReference type="GO" id="GO:0008270">
    <property type="term" value="F:zinc ion binding"/>
    <property type="evidence" value="ECO:0007669"/>
    <property type="project" value="UniProtKB-UniRule"/>
</dbReference>
<dbReference type="GO" id="GO:0045892">
    <property type="term" value="P:negative regulation of DNA-templated transcription"/>
    <property type="evidence" value="ECO:0007669"/>
    <property type="project" value="UniProtKB-UniRule"/>
</dbReference>
<dbReference type="HAMAP" id="MF_00440">
    <property type="entry name" value="NrdR"/>
    <property type="match status" value="1"/>
</dbReference>
<dbReference type="InterPro" id="IPR005144">
    <property type="entry name" value="ATP-cone_dom"/>
</dbReference>
<dbReference type="InterPro" id="IPR055173">
    <property type="entry name" value="NrdR-like_N"/>
</dbReference>
<dbReference type="InterPro" id="IPR003796">
    <property type="entry name" value="RNR_NrdR-like"/>
</dbReference>
<dbReference type="NCBIfam" id="TIGR00244">
    <property type="entry name" value="transcriptional regulator NrdR"/>
    <property type="match status" value="1"/>
</dbReference>
<dbReference type="PANTHER" id="PTHR30455">
    <property type="entry name" value="TRANSCRIPTIONAL REPRESSOR NRDR"/>
    <property type="match status" value="1"/>
</dbReference>
<dbReference type="PANTHER" id="PTHR30455:SF2">
    <property type="entry name" value="TRANSCRIPTIONAL REPRESSOR NRDR"/>
    <property type="match status" value="1"/>
</dbReference>
<dbReference type="Pfam" id="PF03477">
    <property type="entry name" value="ATP-cone"/>
    <property type="match status" value="1"/>
</dbReference>
<dbReference type="Pfam" id="PF22811">
    <property type="entry name" value="Zn_ribbon_NrdR"/>
    <property type="match status" value="1"/>
</dbReference>
<dbReference type="PROSITE" id="PS51161">
    <property type="entry name" value="ATP_CONE"/>
    <property type="match status" value="1"/>
</dbReference>
<organism>
    <name type="scientific">Acidovorax sp. (strain JS42)</name>
    <dbReference type="NCBI Taxonomy" id="232721"/>
    <lineage>
        <taxon>Bacteria</taxon>
        <taxon>Pseudomonadati</taxon>
        <taxon>Pseudomonadota</taxon>
        <taxon>Betaproteobacteria</taxon>
        <taxon>Burkholderiales</taxon>
        <taxon>Comamonadaceae</taxon>
        <taxon>Acidovorax</taxon>
    </lineage>
</organism>
<gene>
    <name evidence="1" type="primary">nrdR</name>
    <name type="ordered locus">Ajs_1659</name>
</gene>
<keyword id="KW-0067">ATP-binding</keyword>
<keyword id="KW-0238">DNA-binding</keyword>
<keyword id="KW-0479">Metal-binding</keyword>
<keyword id="KW-0547">Nucleotide-binding</keyword>
<keyword id="KW-0678">Repressor</keyword>
<keyword id="KW-0804">Transcription</keyword>
<keyword id="KW-0805">Transcription regulation</keyword>
<keyword id="KW-0862">Zinc</keyword>
<keyword id="KW-0863">Zinc-finger</keyword>
<protein>
    <recommendedName>
        <fullName evidence="1">Transcriptional repressor NrdR</fullName>
    </recommendedName>
</protein>
<feature type="chain" id="PRO_1000080699" description="Transcriptional repressor NrdR">
    <location>
        <begin position="1"/>
        <end position="149"/>
    </location>
</feature>
<feature type="domain" description="ATP-cone" evidence="1">
    <location>
        <begin position="49"/>
        <end position="139"/>
    </location>
</feature>
<feature type="zinc finger region" evidence="1">
    <location>
        <begin position="3"/>
        <end position="34"/>
    </location>
</feature>
<accession>A1W6H5</accession>
<name>NRDR_ACISJ</name>